<comment type="function">
    <text>This protein is involved in virus transmission.</text>
</comment>
<comment type="similarity">
    <text evidence="1">Belongs to the caulimoviridae ORF II family.</text>
</comment>
<dbReference type="EMBL" id="X06166">
    <property type="protein sequence ID" value="CAA29524.1"/>
    <property type="molecule type" value="Genomic_DNA"/>
</dbReference>
<dbReference type="PIR" id="S01280">
    <property type="entry name" value="S01280"/>
</dbReference>
<dbReference type="RefSeq" id="NP_619545.1">
    <property type="nucleotide sequence ID" value="NC_003554.1"/>
</dbReference>
<dbReference type="SMR" id="P09521"/>
<dbReference type="KEGG" id="vg:940157"/>
<dbReference type="Proteomes" id="UP000008622">
    <property type="component" value="Segment"/>
</dbReference>
<dbReference type="InterPro" id="IPR004917">
    <property type="entry name" value="Caulimo_AT"/>
</dbReference>
<dbReference type="Pfam" id="PF03233">
    <property type="entry name" value="Cauli_AT"/>
    <property type="match status" value="1"/>
</dbReference>
<evidence type="ECO:0000305" key="1"/>
<gene>
    <name type="ORF">ORF II</name>
</gene>
<keyword id="KW-1185">Reference proteome</keyword>
<organismHost>
    <name type="scientific">Scrophularia californica</name>
    <name type="common">California bee plant</name>
    <dbReference type="NCBI Taxonomy" id="46031"/>
</organismHost>
<sequence>MSKDHLDFPHVYKKNKVLKLKPLDLSKNPRSYYFSSQNGSIQAIINHCNNINQITARNWLKLSKVLSYFGLEKDTSDSISKNKSPFNRFLKDISHIFREGEGSTKKASELGEILEKIKNLDLKIENLNKRIPDNLVTKALIKELVKDFDERLTEVRDDIKKVIG</sequence>
<name>VAT_FMVD</name>
<proteinExistence type="inferred from homology"/>
<accession>P09521</accession>
<organism>
    <name type="scientific">Figwort mosaic virus (strain DxS)</name>
    <name type="common">FMV</name>
    <dbReference type="NCBI Taxonomy" id="10650"/>
    <lineage>
        <taxon>Viruses</taxon>
        <taxon>Riboviria</taxon>
        <taxon>Pararnavirae</taxon>
        <taxon>Artverviricota</taxon>
        <taxon>Revtraviricetes</taxon>
        <taxon>Ortervirales</taxon>
        <taxon>Caulimoviridae</taxon>
        <taxon>Caulimovirus</taxon>
        <taxon>Caulimovirus tesselloscrophulariae</taxon>
    </lineage>
</organism>
<feature type="chain" id="PRO_0000222075" description="Aphid transmission protein">
    <location>
        <begin position="1"/>
        <end position="164"/>
    </location>
</feature>
<reference key="1">
    <citation type="journal article" date="1987" name="Nucleic Acids Res.">
        <title>Sequence of figwort mosaic virus DNA (caulimovirus group).</title>
        <authorList>
            <person name="Richins R.D."/>
            <person name="Scholthof H.B."/>
            <person name="Shepherd R.J."/>
        </authorList>
    </citation>
    <scope>NUCLEOTIDE SEQUENCE [GENOMIC DNA]</scope>
</reference>
<protein>
    <recommendedName>
        <fullName>Aphid transmission protein</fullName>
    </recommendedName>
    <alternativeName>
        <fullName>Atf</fullName>
    </alternativeName>
    <alternativeName>
        <fullName>Protein 2</fullName>
    </alternativeName>
</protein>